<dbReference type="EMBL" id="CP000410">
    <property type="protein sequence ID" value="ABJ55036.1"/>
    <property type="molecule type" value="Genomic_DNA"/>
</dbReference>
<dbReference type="RefSeq" id="WP_001151785.1">
    <property type="nucleotide sequence ID" value="NZ_JAMLJR010000008.1"/>
</dbReference>
<dbReference type="SMR" id="Q04JK8"/>
<dbReference type="PaxDb" id="373153-SPD_1370"/>
<dbReference type="GeneID" id="45653220"/>
<dbReference type="KEGG" id="spd:SPD_1370"/>
<dbReference type="eggNOG" id="COG0360">
    <property type="taxonomic scope" value="Bacteria"/>
</dbReference>
<dbReference type="HOGENOM" id="CLU_113441_5_3_9"/>
<dbReference type="BioCyc" id="SPNE373153:G1G6V-1476-MONOMER"/>
<dbReference type="Proteomes" id="UP000001452">
    <property type="component" value="Chromosome"/>
</dbReference>
<dbReference type="GO" id="GO:0005737">
    <property type="term" value="C:cytoplasm"/>
    <property type="evidence" value="ECO:0007669"/>
    <property type="project" value="UniProtKB-ARBA"/>
</dbReference>
<dbReference type="GO" id="GO:1990904">
    <property type="term" value="C:ribonucleoprotein complex"/>
    <property type="evidence" value="ECO:0007669"/>
    <property type="project" value="UniProtKB-KW"/>
</dbReference>
<dbReference type="GO" id="GO:0005840">
    <property type="term" value="C:ribosome"/>
    <property type="evidence" value="ECO:0007669"/>
    <property type="project" value="UniProtKB-KW"/>
</dbReference>
<dbReference type="GO" id="GO:0070181">
    <property type="term" value="F:small ribosomal subunit rRNA binding"/>
    <property type="evidence" value="ECO:0007669"/>
    <property type="project" value="TreeGrafter"/>
</dbReference>
<dbReference type="GO" id="GO:0003735">
    <property type="term" value="F:structural constituent of ribosome"/>
    <property type="evidence" value="ECO:0007669"/>
    <property type="project" value="InterPro"/>
</dbReference>
<dbReference type="GO" id="GO:0006412">
    <property type="term" value="P:translation"/>
    <property type="evidence" value="ECO:0007669"/>
    <property type="project" value="UniProtKB-UniRule"/>
</dbReference>
<dbReference type="CDD" id="cd00473">
    <property type="entry name" value="bS6"/>
    <property type="match status" value="1"/>
</dbReference>
<dbReference type="FunFam" id="3.30.70.60:FF:000002">
    <property type="entry name" value="30S ribosomal protein S6"/>
    <property type="match status" value="1"/>
</dbReference>
<dbReference type="Gene3D" id="3.30.70.60">
    <property type="match status" value="1"/>
</dbReference>
<dbReference type="HAMAP" id="MF_00360">
    <property type="entry name" value="Ribosomal_bS6"/>
    <property type="match status" value="1"/>
</dbReference>
<dbReference type="InterPro" id="IPR000529">
    <property type="entry name" value="Ribosomal_bS6"/>
</dbReference>
<dbReference type="InterPro" id="IPR035980">
    <property type="entry name" value="Ribosomal_bS6_sf"/>
</dbReference>
<dbReference type="InterPro" id="IPR020814">
    <property type="entry name" value="Ribosomal_S6_plastid/chlpt"/>
</dbReference>
<dbReference type="InterPro" id="IPR014717">
    <property type="entry name" value="Transl_elong_EF1B/ribsomal_bS6"/>
</dbReference>
<dbReference type="NCBIfam" id="TIGR00166">
    <property type="entry name" value="S6"/>
    <property type="match status" value="1"/>
</dbReference>
<dbReference type="PANTHER" id="PTHR21011">
    <property type="entry name" value="MITOCHONDRIAL 28S RIBOSOMAL PROTEIN S6"/>
    <property type="match status" value="1"/>
</dbReference>
<dbReference type="PANTHER" id="PTHR21011:SF1">
    <property type="entry name" value="SMALL RIBOSOMAL SUBUNIT PROTEIN BS6M"/>
    <property type="match status" value="1"/>
</dbReference>
<dbReference type="Pfam" id="PF01250">
    <property type="entry name" value="Ribosomal_S6"/>
    <property type="match status" value="1"/>
</dbReference>
<dbReference type="SUPFAM" id="SSF54995">
    <property type="entry name" value="Ribosomal protein S6"/>
    <property type="match status" value="1"/>
</dbReference>
<reference key="1">
    <citation type="journal article" date="2007" name="J. Bacteriol.">
        <title>Genome sequence of Avery's virulent serotype 2 strain D39 of Streptococcus pneumoniae and comparison with that of unencapsulated laboratory strain R6.</title>
        <authorList>
            <person name="Lanie J.A."/>
            <person name="Ng W.-L."/>
            <person name="Kazmierczak K.M."/>
            <person name="Andrzejewski T.M."/>
            <person name="Davidsen T.M."/>
            <person name="Wayne K.J."/>
            <person name="Tettelin H."/>
            <person name="Glass J.I."/>
            <person name="Winkler M.E."/>
        </authorList>
    </citation>
    <scope>NUCLEOTIDE SEQUENCE [LARGE SCALE GENOMIC DNA]</scope>
    <source>
        <strain>D39 / NCTC 7466</strain>
    </source>
</reference>
<protein>
    <recommendedName>
        <fullName evidence="1">Small ribosomal subunit protein bS6</fullName>
    </recommendedName>
    <alternativeName>
        <fullName evidence="2">30S ribosomal protein S6</fullName>
    </alternativeName>
</protein>
<proteinExistence type="inferred from homology"/>
<accession>Q04JK8</accession>
<feature type="chain" id="PRO_1000005363" description="Small ribosomal subunit protein bS6">
    <location>
        <begin position="1"/>
        <end position="96"/>
    </location>
</feature>
<name>RS6_STRP2</name>
<keyword id="KW-1185">Reference proteome</keyword>
<keyword id="KW-0687">Ribonucleoprotein</keyword>
<keyword id="KW-0689">Ribosomal protein</keyword>
<keyword id="KW-0694">RNA-binding</keyword>
<keyword id="KW-0699">rRNA-binding</keyword>
<evidence type="ECO:0000255" key="1">
    <source>
        <dbReference type="HAMAP-Rule" id="MF_00360"/>
    </source>
</evidence>
<evidence type="ECO:0000305" key="2"/>
<comment type="function">
    <text evidence="1">Binds together with bS18 to 16S ribosomal RNA.</text>
</comment>
<comment type="similarity">
    <text evidence="1">Belongs to the bacterial ribosomal protein bS6 family.</text>
</comment>
<gene>
    <name evidence="1" type="primary">rpsF</name>
    <name type="ordered locus">SPD_1370</name>
</gene>
<organism>
    <name type="scientific">Streptococcus pneumoniae serotype 2 (strain D39 / NCTC 7466)</name>
    <dbReference type="NCBI Taxonomy" id="373153"/>
    <lineage>
        <taxon>Bacteria</taxon>
        <taxon>Bacillati</taxon>
        <taxon>Bacillota</taxon>
        <taxon>Bacilli</taxon>
        <taxon>Lactobacillales</taxon>
        <taxon>Streptococcaceae</taxon>
        <taxon>Streptococcus</taxon>
    </lineage>
</organism>
<sequence length="96" mass="11153">MAKYEILYIIRPNIEEEAKNALVARFDSILTDNGATVVESKTWEKRRLAYEIQDFREGLYHIVNVEANDDAALKEFDRLSKINADILRHMIVKIDA</sequence>